<sequence>MKFLELADLDTVNNALSFDADDCRIRGKCELYTTKSTNSDKKLFKAIENRCQEDLFALSSSKSPEYAFSLTQQSPFGPLDQSSSRRTFMYIVATLNASYPDHDFSSLQPTDFYKEPSLSRVVDSVNSTLNNIGRGRLSVNGIWEIIDRHINLSDCSVYSYTPDSDSDPYGDDALIWGMSYFFFNKNMKRMLYLSLHGLGKEVSGRNRYGNDDDSVFTPLADDAEPSDFDDDWVANMDD</sequence>
<keyword id="KW-0963">Cytoplasm</keyword>
<keyword id="KW-0539">Nucleus</keyword>
<keyword id="KW-1185">Reference proteome</keyword>
<keyword id="KW-0678">Repressor</keyword>
<keyword id="KW-0804">Transcription</keyword>
<keyword id="KW-0805">Transcription regulation</keyword>
<evidence type="ECO:0000250" key="1"/>
<evidence type="ECO:0000256" key="2">
    <source>
        <dbReference type="SAM" id="MobiDB-lite"/>
    </source>
</evidence>
<evidence type="ECO:0000269" key="3">
    <source>
    </source>
</evidence>
<evidence type="ECO:0000305" key="4"/>
<protein>
    <recommendedName>
        <fullName>Repressor of RNA polymerase III transcription maf1</fullName>
    </recommendedName>
</protein>
<organism>
    <name type="scientific">Schizosaccharomyces pombe (strain 972 / ATCC 24843)</name>
    <name type="common">Fission yeast</name>
    <dbReference type="NCBI Taxonomy" id="284812"/>
    <lineage>
        <taxon>Eukaryota</taxon>
        <taxon>Fungi</taxon>
        <taxon>Dikarya</taxon>
        <taxon>Ascomycota</taxon>
        <taxon>Taphrinomycotina</taxon>
        <taxon>Schizosaccharomycetes</taxon>
        <taxon>Schizosaccharomycetales</taxon>
        <taxon>Schizosaccharomycetaceae</taxon>
        <taxon>Schizosaccharomyces</taxon>
    </lineage>
</organism>
<dbReference type="EMBL" id="D84656">
    <property type="protein sequence ID" value="BAA12706.1"/>
    <property type="status" value="ALT_SEQ"/>
    <property type="molecule type" value="Genomic_DNA"/>
</dbReference>
<dbReference type="EMBL" id="CU329670">
    <property type="protein sequence ID" value="CAB75348.3"/>
    <property type="molecule type" value="Genomic_DNA"/>
</dbReference>
<dbReference type="PIR" id="T38629">
    <property type="entry name" value="T38629"/>
</dbReference>
<dbReference type="RefSeq" id="NP_594012.2">
    <property type="nucleotide sequence ID" value="NM_001019438.3"/>
</dbReference>
<dbReference type="SMR" id="O14109"/>
<dbReference type="BioGRID" id="278858">
    <property type="interactions" value="13"/>
</dbReference>
<dbReference type="FunCoup" id="O14109">
    <property type="interactions" value="585"/>
</dbReference>
<dbReference type="STRING" id="284812.O14109"/>
<dbReference type="iPTMnet" id="O14109"/>
<dbReference type="PaxDb" id="4896-SPAC31G5.12c.1"/>
<dbReference type="EnsemblFungi" id="SPAC31G5.12c.1">
    <property type="protein sequence ID" value="SPAC31G5.12c.1:pep"/>
    <property type="gene ID" value="SPAC31G5.12c"/>
</dbReference>
<dbReference type="GeneID" id="2542394"/>
<dbReference type="KEGG" id="spo:2542394"/>
<dbReference type="PomBase" id="SPAC31G5.12c">
    <property type="gene designation" value="maf1"/>
</dbReference>
<dbReference type="VEuPathDB" id="FungiDB:SPAC31G5.12c"/>
<dbReference type="eggNOG" id="KOG3104">
    <property type="taxonomic scope" value="Eukaryota"/>
</dbReference>
<dbReference type="HOGENOM" id="CLU_037043_3_0_1"/>
<dbReference type="InParanoid" id="O14109"/>
<dbReference type="OMA" id="DKVCRKT"/>
<dbReference type="PhylomeDB" id="O14109"/>
<dbReference type="Reactome" id="R-SPO-8943724">
    <property type="pathway name" value="Regulation of PTEN gene transcription"/>
</dbReference>
<dbReference type="PRO" id="PR:O14109"/>
<dbReference type="Proteomes" id="UP000002485">
    <property type="component" value="Chromosome I"/>
</dbReference>
<dbReference type="GO" id="GO:0005737">
    <property type="term" value="C:cytoplasm"/>
    <property type="evidence" value="ECO:0007669"/>
    <property type="project" value="UniProtKB-SubCell"/>
</dbReference>
<dbReference type="GO" id="GO:0005634">
    <property type="term" value="C:nucleus"/>
    <property type="evidence" value="ECO:0000318"/>
    <property type="project" value="GO_Central"/>
</dbReference>
<dbReference type="GO" id="GO:0106250">
    <property type="term" value="F:DNA-binding transcription repressor activity, RNA polymerase III-specific"/>
    <property type="evidence" value="ECO:0000269"/>
    <property type="project" value="PomBase"/>
</dbReference>
<dbReference type="GO" id="GO:0000994">
    <property type="term" value="F:RNA polymerase III core binding"/>
    <property type="evidence" value="ECO:0000318"/>
    <property type="project" value="GO_Central"/>
</dbReference>
<dbReference type="GO" id="GO:0016480">
    <property type="term" value="P:negative regulation of transcription by RNA polymerase III"/>
    <property type="evidence" value="ECO:0000314"/>
    <property type="project" value="PomBase"/>
</dbReference>
<dbReference type="Gene3D" id="3.40.1000.50">
    <property type="entry name" value="Repressor of RNA polymerase III transcription Maf1"/>
    <property type="match status" value="1"/>
</dbReference>
<dbReference type="InterPro" id="IPR015257">
    <property type="entry name" value="Maf1"/>
</dbReference>
<dbReference type="InterPro" id="IPR038564">
    <property type="entry name" value="Maf1_sf"/>
</dbReference>
<dbReference type="PANTHER" id="PTHR22504">
    <property type="entry name" value="REPRESSOR OF RNA POLYMERASE III TRANSCRIPTION MAF1"/>
    <property type="match status" value="1"/>
</dbReference>
<dbReference type="PANTHER" id="PTHR22504:SF0">
    <property type="entry name" value="REPRESSOR OF RNA POLYMERASE III TRANSCRIPTION MAF1 HOMOLOG"/>
    <property type="match status" value="1"/>
</dbReference>
<dbReference type="Pfam" id="PF09174">
    <property type="entry name" value="Maf1"/>
    <property type="match status" value="1"/>
</dbReference>
<dbReference type="PIRSF" id="PIRSF037240">
    <property type="entry name" value="RNA_polIII_Trep_MAF1"/>
    <property type="match status" value="1"/>
</dbReference>
<feature type="chain" id="PRO_0000116721" description="Repressor of RNA polymerase III transcription maf1">
    <location>
        <begin position="1"/>
        <end position="238"/>
    </location>
</feature>
<feature type="region of interest" description="Disordered" evidence="2">
    <location>
        <begin position="215"/>
        <end position="238"/>
    </location>
</feature>
<feature type="compositionally biased region" description="Acidic residues" evidence="2">
    <location>
        <begin position="221"/>
        <end position="238"/>
    </location>
</feature>
<feature type="sequence conflict" description="In Ref. 1; BAA12706." evidence="4" ref="1">
    <original>D</original>
    <variation>V</variation>
    <location>
        <position position="167"/>
    </location>
</feature>
<gene>
    <name type="primary">maf1</name>
    <name type="ORF">N150</name>
    <name type="ORF">SPAC31G5.12c</name>
</gene>
<proteinExistence type="evidence at protein level"/>
<comment type="function">
    <text evidence="3">Mediator of diverse signals that repress RNA polymerase III transcription. Inhibits the de novo assembly of TFIIIB onto DNA.</text>
</comment>
<comment type="subunit">
    <text>Interacts with TFIIIB subunit brf1 and RNA polymerase III subunit rpc82.</text>
</comment>
<comment type="subcellular location">
    <subcellularLocation>
        <location evidence="1">Cytoplasm</location>
    </subcellularLocation>
    <subcellularLocation>
        <location evidence="1">Nucleus</location>
    </subcellularLocation>
</comment>
<comment type="similarity">
    <text evidence="4">Belongs to the MAF1 family.</text>
</comment>
<comment type="sequence caution" evidence="4">
    <conflict type="erroneous gene model prediction">
        <sequence resource="EMBL-CDS" id="BAA12706"/>
    </conflict>
</comment>
<name>MAF1_SCHPO</name>
<accession>O14109</accession>
<accession>Q92362</accession>
<reference key="1">
    <citation type="submission" date="1996-04" db="EMBL/GenBank/DDBJ databases">
        <title>The nucleotide sequence of a 9.1 kb DNA fragment of Schizosaccharomyces pombe chromosome reveals the presence of pad1+/sks1+ gene and three previously unknown open reading frames.</title>
        <authorList>
            <person name="Nagao K."/>
            <person name="Arioka M."/>
            <person name="Kadokura H."/>
            <person name="Yoda K."/>
            <person name="Yamasaki M."/>
        </authorList>
    </citation>
    <scope>NUCLEOTIDE SEQUENCE [GENOMIC DNA]</scope>
</reference>
<reference key="2">
    <citation type="journal article" date="2002" name="Nature">
        <title>The genome sequence of Schizosaccharomyces pombe.</title>
        <authorList>
            <person name="Wood V."/>
            <person name="Gwilliam R."/>
            <person name="Rajandream M.A."/>
            <person name="Lyne M.H."/>
            <person name="Lyne R."/>
            <person name="Stewart A."/>
            <person name="Sgouros J.G."/>
            <person name="Peat N."/>
            <person name="Hayles J."/>
            <person name="Baker S.G."/>
            <person name="Basham D."/>
            <person name="Bowman S."/>
            <person name="Brooks K."/>
            <person name="Brown D."/>
            <person name="Brown S."/>
            <person name="Chillingworth T."/>
            <person name="Churcher C.M."/>
            <person name="Collins M."/>
            <person name="Connor R."/>
            <person name="Cronin A."/>
            <person name="Davis P."/>
            <person name="Feltwell T."/>
            <person name="Fraser A."/>
            <person name="Gentles S."/>
            <person name="Goble A."/>
            <person name="Hamlin N."/>
            <person name="Harris D.E."/>
            <person name="Hidalgo J."/>
            <person name="Hodgson G."/>
            <person name="Holroyd S."/>
            <person name="Hornsby T."/>
            <person name="Howarth S."/>
            <person name="Huckle E.J."/>
            <person name="Hunt S."/>
            <person name="Jagels K."/>
            <person name="James K.D."/>
            <person name="Jones L."/>
            <person name="Jones M."/>
            <person name="Leather S."/>
            <person name="McDonald S."/>
            <person name="McLean J."/>
            <person name="Mooney P."/>
            <person name="Moule S."/>
            <person name="Mungall K.L."/>
            <person name="Murphy L.D."/>
            <person name="Niblett D."/>
            <person name="Odell C."/>
            <person name="Oliver K."/>
            <person name="O'Neil S."/>
            <person name="Pearson D."/>
            <person name="Quail M.A."/>
            <person name="Rabbinowitsch E."/>
            <person name="Rutherford K.M."/>
            <person name="Rutter S."/>
            <person name="Saunders D."/>
            <person name="Seeger K."/>
            <person name="Sharp S."/>
            <person name="Skelton J."/>
            <person name="Simmonds M.N."/>
            <person name="Squares R."/>
            <person name="Squares S."/>
            <person name="Stevens K."/>
            <person name="Taylor K."/>
            <person name="Taylor R.G."/>
            <person name="Tivey A."/>
            <person name="Walsh S.V."/>
            <person name="Warren T."/>
            <person name="Whitehead S."/>
            <person name="Woodward J.R."/>
            <person name="Volckaert G."/>
            <person name="Aert R."/>
            <person name="Robben J."/>
            <person name="Grymonprez B."/>
            <person name="Weltjens I."/>
            <person name="Vanstreels E."/>
            <person name="Rieger M."/>
            <person name="Schaefer M."/>
            <person name="Mueller-Auer S."/>
            <person name="Gabel C."/>
            <person name="Fuchs M."/>
            <person name="Duesterhoeft A."/>
            <person name="Fritzc C."/>
            <person name="Holzer E."/>
            <person name="Moestl D."/>
            <person name="Hilbert H."/>
            <person name="Borzym K."/>
            <person name="Langer I."/>
            <person name="Beck A."/>
            <person name="Lehrach H."/>
            <person name="Reinhardt R."/>
            <person name="Pohl T.M."/>
            <person name="Eger P."/>
            <person name="Zimmermann W."/>
            <person name="Wedler H."/>
            <person name="Wambutt R."/>
            <person name="Purnelle B."/>
            <person name="Goffeau A."/>
            <person name="Cadieu E."/>
            <person name="Dreano S."/>
            <person name="Gloux S."/>
            <person name="Lelaure V."/>
            <person name="Mottier S."/>
            <person name="Galibert F."/>
            <person name="Aves S.J."/>
            <person name="Xiang Z."/>
            <person name="Hunt C."/>
            <person name="Moore K."/>
            <person name="Hurst S.M."/>
            <person name="Lucas M."/>
            <person name="Rochet M."/>
            <person name="Gaillardin C."/>
            <person name="Tallada V.A."/>
            <person name="Garzon A."/>
            <person name="Thode G."/>
            <person name="Daga R.R."/>
            <person name="Cruzado L."/>
            <person name="Jimenez J."/>
            <person name="Sanchez M."/>
            <person name="del Rey F."/>
            <person name="Benito J."/>
            <person name="Dominguez A."/>
            <person name="Revuelta J.L."/>
            <person name="Moreno S."/>
            <person name="Armstrong J."/>
            <person name="Forsburg S.L."/>
            <person name="Cerutti L."/>
            <person name="Lowe T."/>
            <person name="McCombie W.R."/>
            <person name="Paulsen I."/>
            <person name="Potashkin J."/>
            <person name="Shpakovski G.V."/>
            <person name="Ussery D."/>
            <person name="Barrell B.G."/>
            <person name="Nurse P."/>
        </authorList>
    </citation>
    <scope>NUCLEOTIDE SEQUENCE [LARGE SCALE GENOMIC DNA]</scope>
    <source>
        <strain>972 / ATCC 24843</strain>
    </source>
</reference>
<reference key="3">
    <citation type="journal article" date="2005" name="J. Biol. Chem.">
        <title>Two steps in Maf1-dependent repression of transcription by RNA polymerase III.</title>
        <authorList>
            <person name="Desai N."/>
            <person name="Lee J."/>
            <person name="Upadhya R."/>
            <person name="Chu Y."/>
            <person name="Moir R.D."/>
            <person name="Willis I.M."/>
        </authorList>
    </citation>
    <scope>FUNCTION</scope>
    <scope>INTERACTION WITH BFR1 AND RPC82</scope>
</reference>